<proteinExistence type="evidence at protein level"/>
<keyword id="KW-0002">3D-structure</keyword>
<keyword id="KW-0903">Direct protein sequencing</keyword>
<keyword id="KW-0496">Mitochondrion</keyword>
<keyword id="KW-1185">Reference proteome</keyword>
<keyword id="KW-0687">Ribonucleoprotein</keyword>
<keyword id="KW-0689">Ribosomal protein</keyword>
<keyword id="KW-0809">Transit peptide</keyword>
<comment type="subunit">
    <text evidence="1">Component of the mitochondrial ribosome large subunit (39S) which comprises a 16S rRNA and about 50 distinct proteins.</text>
</comment>
<comment type="subcellular location">
    <subcellularLocation>
        <location evidence="2 3">Mitochondrion</location>
    </subcellularLocation>
</comment>
<comment type="similarity">
    <text evidence="4">Belongs to the bacterial ribosomal protein bL17 family.</text>
</comment>
<evidence type="ECO:0000250" key="1">
    <source>
        <dbReference type="UniProtKB" id="Q9NRX2"/>
    </source>
</evidence>
<evidence type="ECO:0000269" key="2">
    <source>
    </source>
</evidence>
<evidence type="ECO:0000269" key="3">
    <source>
    </source>
</evidence>
<evidence type="ECO:0000305" key="4"/>
<gene>
    <name type="primary">MRPL17</name>
</gene>
<name>RM17_BOVIN</name>
<sequence length="172" mass="19746">MRLSFAAAISHGRVYRRLGLGPESRIHLLQNLLTGLVRHERIEASWARVDELRGYAEKLIDYGKLGDTNERAMRMADFWLTEKDLIPKLFQVLAPRYQGQNGGYTRMLQIPNRNQQDRAKMAVIEYKGNCLPPLPLPRRDSNLTLLNQLLRGLRQDQEASTRSSHPAQTPEV</sequence>
<feature type="transit peptide" description="Mitochondrion" evidence="2">
    <location>
        <begin position="1"/>
        <end position="8"/>
    </location>
</feature>
<feature type="chain" id="PRO_0000237330" description="Large ribosomal subunit protein bL17m">
    <location>
        <begin position="9"/>
        <end position="172"/>
    </location>
</feature>
<accession>Q3T0L3</accession>
<reference key="1">
    <citation type="submission" date="2005-08" db="EMBL/GenBank/DDBJ databases">
        <authorList>
            <consortium name="NIH - Mammalian Gene Collection (MGC) project"/>
        </authorList>
    </citation>
    <scope>NUCLEOTIDE SEQUENCE [LARGE SCALE MRNA]</scope>
    <source>
        <strain>Crossbred X Angus</strain>
        <tissue>Ileum</tissue>
    </source>
</reference>
<reference key="2">
    <citation type="journal article" date="1999" name="J. Biol. Chem.">
        <title>Mammalian mitochondrial ribosomal proteins (2). Amino acid sequencing, characterization, and identification of corresponding gene sequences.</title>
        <authorList>
            <person name="O'Brien T.W."/>
            <person name="Fiesler S.E."/>
            <person name="Denslow N.D."/>
            <person name="Thiede B."/>
            <person name="Wittmann-Liebold B."/>
            <person name="Mougey E.B."/>
            <person name="Sylvester J.E."/>
            <person name="Graack H.R."/>
        </authorList>
    </citation>
    <scope>PROTEIN SEQUENCE OF 9-28</scope>
    <scope>SUBCELLULAR LOCATION</scope>
</reference>
<reference key="3">
    <citation type="journal article" date="2006" name="J. Mol. Biol.">
        <title>A structural model for the large subunit of the mammalian mitochondrial ribosome.</title>
        <authorList>
            <person name="Mears J.A."/>
            <person name="Sharma M.R."/>
            <person name="Gutell R.R."/>
            <person name="McCook A.S."/>
            <person name="Richardson P.E."/>
            <person name="Caulfield T.R."/>
            <person name="Agrawal R.K."/>
            <person name="Harvey S.C."/>
        </authorList>
    </citation>
    <scope>STRUCTURE BY ELECTRON MICROSCOPY (12 ANGSTROMS)</scope>
    <scope>SUBCELLULAR LOCATION</scope>
</reference>
<organism>
    <name type="scientific">Bos taurus</name>
    <name type="common">Bovine</name>
    <dbReference type="NCBI Taxonomy" id="9913"/>
    <lineage>
        <taxon>Eukaryota</taxon>
        <taxon>Metazoa</taxon>
        <taxon>Chordata</taxon>
        <taxon>Craniata</taxon>
        <taxon>Vertebrata</taxon>
        <taxon>Euteleostomi</taxon>
        <taxon>Mammalia</taxon>
        <taxon>Eutheria</taxon>
        <taxon>Laurasiatheria</taxon>
        <taxon>Artiodactyla</taxon>
        <taxon>Ruminantia</taxon>
        <taxon>Pecora</taxon>
        <taxon>Bovidae</taxon>
        <taxon>Bovinae</taxon>
        <taxon>Bos</taxon>
    </lineage>
</organism>
<dbReference type="EMBL" id="BC102348">
    <property type="protein sequence ID" value="AAI02349.1"/>
    <property type="molecule type" value="mRNA"/>
</dbReference>
<dbReference type="RefSeq" id="NP_001029446.1">
    <property type="nucleotide sequence ID" value="NM_001034274.2"/>
</dbReference>
<dbReference type="PDB" id="2FTC">
    <property type="method" value="EM"/>
    <property type="chains" value="J=11-127"/>
</dbReference>
<dbReference type="PDB" id="3IY9">
    <property type="method" value="EM"/>
    <property type="resolution" value="14.10 A"/>
    <property type="chains" value="S=11-127"/>
</dbReference>
<dbReference type="PDBsum" id="2FTC"/>
<dbReference type="PDBsum" id="3IY9"/>
<dbReference type="SMR" id="Q3T0L3"/>
<dbReference type="FunCoup" id="Q3T0L3">
    <property type="interactions" value="2538"/>
</dbReference>
<dbReference type="IntAct" id="Q3T0L3">
    <property type="interactions" value="1"/>
</dbReference>
<dbReference type="STRING" id="9913.ENSBTAP00000034395"/>
<dbReference type="PaxDb" id="9913-ENSBTAP00000034395"/>
<dbReference type="Ensembl" id="ENSBTAT00000034505.4">
    <property type="protein sequence ID" value="ENSBTAP00000034395.2"/>
    <property type="gene ID" value="ENSBTAG00000024781.4"/>
</dbReference>
<dbReference type="GeneID" id="506988"/>
<dbReference type="KEGG" id="bta:506988"/>
<dbReference type="CTD" id="63875"/>
<dbReference type="VEuPathDB" id="HostDB:ENSBTAG00000024781"/>
<dbReference type="VGNC" id="VGNC:112646">
    <property type="gene designation" value="MRPL17"/>
</dbReference>
<dbReference type="eggNOG" id="KOG3280">
    <property type="taxonomic scope" value="Eukaryota"/>
</dbReference>
<dbReference type="GeneTree" id="ENSGT00390000010698"/>
<dbReference type="HOGENOM" id="CLU_074407_3_2_1"/>
<dbReference type="InParanoid" id="Q3T0L3"/>
<dbReference type="OMA" id="HKPTMEM"/>
<dbReference type="OrthoDB" id="275000at2759"/>
<dbReference type="TreeFam" id="TF105844"/>
<dbReference type="Reactome" id="R-BTA-5389840">
    <property type="pathway name" value="Mitochondrial translation elongation"/>
</dbReference>
<dbReference type="Reactome" id="R-BTA-5419276">
    <property type="pathway name" value="Mitochondrial translation termination"/>
</dbReference>
<dbReference type="EvolutionaryTrace" id="Q3T0L3"/>
<dbReference type="Proteomes" id="UP000009136">
    <property type="component" value="Chromosome 15"/>
</dbReference>
<dbReference type="Bgee" id="ENSBTAG00000024781">
    <property type="expression patterns" value="Expressed in diaphragm and 106 other cell types or tissues"/>
</dbReference>
<dbReference type="GO" id="GO:0005743">
    <property type="term" value="C:mitochondrial inner membrane"/>
    <property type="evidence" value="ECO:0000304"/>
    <property type="project" value="Reactome"/>
</dbReference>
<dbReference type="GO" id="GO:0005762">
    <property type="term" value="C:mitochondrial large ribosomal subunit"/>
    <property type="evidence" value="ECO:0000250"/>
    <property type="project" value="UniProtKB"/>
</dbReference>
<dbReference type="GO" id="GO:0003735">
    <property type="term" value="F:structural constituent of ribosome"/>
    <property type="evidence" value="ECO:0000318"/>
    <property type="project" value="GO_Central"/>
</dbReference>
<dbReference type="GO" id="GO:0006412">
    <property type="term" value="P:translation"/>
    <property type="evidence" value="ECO:0007669"/>
    <property type="project" value="InterPro"/>
</dbReference>
<dbReference type="FunFam" id="3.90.1030.10:FF:000007">
    <property type="entry name" value="39S ribosomal protein L17, mitochondrial"/>
    <property type="match status" value="1"/>
</dbReference>
<dbReference type="Gene3D" id="3.90.1030.10">
    <property type="entry name" value="Ribosomal protein L17"/>
    <property type="match status" value="1"/>
</dbReference>
<dbReference type="InterPro" id="IPR000456">
    <property type="entry name" value="Ribosomal_bL17"/>
</dbReference>
<dbReference type="InterPro" id="IPR036373">
    <property type="entry name" value="Ribosomal_bL17_sf"/>
</dbReference>
<dbReference type="NCBIfam" id="TIGR00059">
    <property type="entry name" value="L17"/>
    <property type="match status" value="1"/>
</dbReference>
<dbReference type="PANTHER" id="PTHR14413:SF16">
    <property type="entry name" value="LARGE RIBOSOMAL SUBUNIT PROTEIN BL17M"/>
    <property type="match status" value="1"/>
</dbReference>
<dbReference type="PANTHER" id="PTHR14413">
    <property type="entry name" value="RIBOSOMAL PROTEIN L17"/>
    <property type="match status" value="1"/>
</dbReference>
<dbReference type="Pfam" id="PF01196">
    <property type="entry name" value="Ribosomal_L17"/>
    <property type="match status" value="1"/>
</dbReference>
<dbReference type="SUPFAM" id="SSF64263">
    <property type="entry name" value="Prokaryotic ribosomal protein L17"/>
    <property type="match status" value="1"/>
</dbReference>
<protein>
    <recommendedName>
        <fullName evidence="4">Large ribosomal subunit protein bL17m</fullName>
    </recommendedName>
    <alternativeName>
        <fullName>39S ribosomal protein L17, mitochondrial</fullName>
        <shortName>L17mt</shortName>
        <shortName>MRP-L17</shortName>
    </alternativeName>
</protein>